<protein>
    <recommendedName>
        <fullName evidence="3">Enterotoxin-like toxin X</fullName>
    </recommendedName>
</protein>
<dbReference type="EMBL" id="HQ850970">
    <property type="protein sequence ID" value="AEI60187.1"/>
    <property type="molecule type" value="Genomic_DNA"/>
</dbReference>
<dbReference type="RefSeq" id="WP_000475329.1">
    <property type="nucleotide sequence ID" value="NZ_SSWQ01000003.1"/>
</dbReference>
<dbReference type="PDB" id="5U75">
    <property type="method" value="X-ray"/>
    <property type="resolution" value="1.66 A"/>
    <property type="chains" value="A=36-203"/>
</dbReference>
<dbReference type="PDBsum" id="5U75"/>
<dbReference type="SMR" id="G0Z026"/>
<dbReference type="GO" id="GO:0005576">
    <property type="term" value="C:extracellular region"/>
    <property type="evidence" value="ECO:0007669"/>
    <property type="project" value="UniProtKB-SubCell"/>
</dbReference>
<dbReference type="FunFam" id="3.10.20.120:FF:000002">
    <property type="entry name" value="Enterotoxin-like toxin X"/>
    <property type="match status" value="1"/>
</dbReference>
<dbReference type="Gene3D" id="3.10.20.120">
    <property type="match status" value="1"/>
</dbReference>
<dbReference type="InterPro" id="IPR016091">
    <property type="entry name" value="SuperAg_toxin_C"/>
</dbReference>
<dbReference type="InterPro" id="IPR006123">
    <property type="entry name" value="Toxin_b-grasp_Staph/Strep"/>
</dbReference>
<dbReference type="Pfam" id="PF02876">
    <property type="entry name" value="Stap_Strp_tox_C"/>
    <property type="match status" value="1"/>
</dbReference>
<dbReference type="SUPFAM" id="SSF54334">
    <property type="entry name" value="Superantigen toxins, C-terminal domain"/>
    <property type="match status" value="1"/>
</dbReference>
<comment type="function">
    <text evidence="2">Plays a role in the inhibition of the host innate immune system. Inhibits phagocytosis and killing by human neutrophils by interacting with multiple neutrophil surface glycoproteins in a sialic acid-dependent manner.</text>
</comment>
<comment type="subcellular location">
    <subcellularLocation>
        <location evidence="1">Secreted</location>
    </subcellularLocation>
</comment>
<comment type="induction">
    <text evidence="2">Under the control of the Staphylococcus aureus exotoxin expression (Sae) two component gene regulatory system.</text>
</comment>
<comment type="domain">
    <text evidence="2">The C-terminal domain contains a V-shape binding site for sialyl Lewis X.</text>
</comment>
<comment type="similarity">
    <text evidence="4">Belongs to the staphylococcal/streptococcal toxin family.</text>
</comment>
<proteinExistence type="evidence at protein level"/>
<keyword id="KW-0002">3D-structure</keyword>
<keyword id="KW-0964">Secreted</keyword>
<feature type="chain" id="PRO_0000447514" description="Enterotoxin-like toxin X">
    <location>
        <begin position="1"/>
        <end position="203"/>
    </location>
</feature>
<feature type="region of interest" description="Sialic acid-binding motif" evidence="5">
    <location>
        <begin position="164"/>
        <end position="180"/>
    </location>
</feature>
<feature type="mutagenesis site" description="Loss of binding to human granulocytes and monocytes." evidence="2">
    <original>T</original>
    <variation>A</variation>
    <location>
        <position position="165"/>
    </location>
</feature>
<feature type="mutagenesis site" description="Loss of binding to human granulocytes and monocytes." evidence="2">
    <original>R</original>
    <variation>A</variation>
    <location>
        <position position="176"/>
    </location>
</feature>
<feature type="helix" evidence="6">
    <location>
        <begin position="58"/>
        <end position="70"/>
    </location>
</feature>
<feature type="strand" evidence="6">
    <location>
        <begin position="73"/>
        <end position="75"/>
    </location>
</feature>
<feature type="turn" evidence="6">
    <location>
        <begin position="82"/>
        <end position="86"/>
    </location>
</feature>
<feature type="strand" evidence="6">
    <location>
        <begin position="96"/>
        <end position="107"/>
    </location>
</feature>
<feature type="strand" evidence="6">
    <location>
        <begin position="110"/>
        <end position="112"/>
    </location>
</feature>
<feature type="strand" evidence="6">
    <location>
        <begin position="116"/>
        <end position="126"/>
    </location>
</feature>
<feature type="helix" evidence="6">
    <location>
        <begin position="127"/>
        <end position="139"/>
    </location>
</feature>
<feature type="turn" evidence="6">
    <location>
        <begin position="140"/>
        <end position="144"/>
    </location>
</feature>
<feature type="strand" evidence="6">
    <location>
        <begin position="146"/>
        <end position="148"/>
    </location>
</feature>
<feature type="strand" evidence="6">
    <location>
        <begin position="151"/>
        <end position="158"/>
    </location>
</feature>
<feature type="strand" evidence="6">
    <location>
        <begin position="163"/>
        <end position="167"/>
    </location>
</feature>
<feature type="helix" evidence="6">
    <location>
        <begin position="174"/>
        <end position="176"/>
    </location>
</feature>
<feature type="strand" evidence="6">
    <location>
        <begin position="180"/>
        <end position="182"/>
    </location>
</feature>
<feature type="helix" evidence="6">
    <location>
        <begin position="183"/>
        <end position="185"/>
    </location>
</feature>
<feature type="strand" evidence="6">
    <location>
        <begin position="186"/>
        <end position="195"/>
    </location>
</feature>
<evidence type="ECO:0000250" key="1">
    <source>
        <dbReference type="UniProtKB" id="Q2G0X7"/>
    </source>
</evidence>
<evidence type="ECO:0000269" key="2">
    <source>
    </source>
</evidence>
<evidence type="ECO:0000303" key="3">
    <source>
    </source>
</evidence>
<evidence type="ECO:0000305" key="4"/>
<evidence type="ECO:0000305" key="5">
    <source>
    </source>
</evidence>
<evidence type="ECO:0007829" key="6">
    <source>
        <dbReference type="PDB" id="5U75"/>
    </source>
</evidence>
<accession>G0Z026</accession>
<organism>
    <name type="scientific">Staphylococcus aureus</name>
    <dbReference type="NCBI Taxonomy" id="1280"/>
    <lineage>
        <taxon>Bacteria</taxon>
        <taxon>Bacillati</taxon>
        <taxon>Bacillota</taxon>
        <taxon>Bacilli</taxon>
        <taxon>Bacillales</taxon>
        <taxon>Staphylococcaceae</taxon>
        <taxon>Staphylococcus</taxon>
    </lineage>
</organism>
<sequence>MFKKYDSKNSIVLKSILSLGIIYSGSFGIYPKADASTQNSSSVQDKQLQKVEEVPNNSEKALVKKLYDRYSKDTINGKSNKSRNWVYSERPLNENQVRIHLEGTYTVAGRVYTPKRNITLNKEVVTLKELDHIIRFAHISYGLYMGEHLPKGNIVINTKNGGKYTLESHKELQKNRENVEINTDDIKNVTFELVKSVNDIEQV</sequence>
<name>SELX_STAAU</name>
<gene>
    <name evidence="3" type="primary">selX</name>
</gene>
<reference key="1">
    <citation type="journal article" date="2011" name="PLoS Pathog.">
        <title>A novel core genome-encoded superantigen contributes to lethality of community-associated MRSA necrotizing pneumonia.</title>
        <authorList>
            <person name="Wilson G.J."/>
            <person name="Seo K.S."/>
            <person name="Cartwright R.A."/>
            <person name="Connelley T."/>
            <person name="Chuang-Smith O.N."/>
            <person name="Merriman J.A."/>
            <person name="Guinane C.M."/>
            <person name="Park J.Y."/>
            <person name="Bohach G.A."/>
            <person name="Schlievert P.M."/>
            <person name="Morrison W.I."/>
            <person name="Fitzgerald J.R."/>
        </authorList>
    </citation>
    <scope>NUCLEOTIDE SEQUENCE [GENOMIC DNA]</scope>
    <source>
        <strain>951</strain>
    </source>
</reference>
<reference key="2">
    <citation type="journal article" date="2017" name="PLoS Pathog.">
        <title>Staphylococcal enterotoxin-like X (SElX) is a unique superantigen with functional features of two major families of staphylococcal virulence factors.</title>
        <authorList>
            <person name="Langley R.J."/>
            <person name="Ting Y.T."/>
            <person name="Clow F."/>
            <person name="Young P.G."/>
            <person name="Radcliff F.J."/>
            <person name="Choi J.M."/>
            <person name="Sequeira R.P."/>
            <person name="Holtfreter S."/>
            <person name="Baker H."/>
            <person name="Fraser J.D."/>
        </authorList>
    </citation>
    <scope>X-RAY CRYSTALLOGRAPHY (1.66 ANGSTROMS) OF 36-203</scope>
    <scope>FUNCTION</scope>
    <scope>MUTAGENESIS OF THR-165 AND ARG-176</scope>
    <scope>INDUCTION BY SAE</scope>
</reference>